<proteinExistence type="inferred from homology"/>
<feature type="chain" id="PRO_0000320397" description="Ribosome biogenesis protein NSA1">
    <location>
        <begin position="1"/>
        <end position="436"/>
    </location>
</feature>
<feature type="region of interest" description="Disordered" evidence="2">
    <location>
        <begin position="405"/>
        <end position="436"/>
    </location>
</feature>
<sequence>MRVLASCVDNGSLKEAVFGFGTDTSVQTAPQPQLIETHLCEGLDAHVEQIHKIDDGKWLLARHNGTVQYVESELVDHSEIEGMKVSHFDVVGSITGLLDVSRLDHLNAQSKRRTKLKDGFVSLAPVSKKDCYLACTKSGLVHILALNFKDKLLTKLQTFEVKAPLEFAQVYDVEKTKKTVFACGGEENLVKLFELSESCDKISMIWESKNVKNDRLDMRVPVWPVALKFLQPVPTSSAGYDKNKLNFQFLVVTGWSHFGIYNTQHGKRPMKYLDLLPEREPLRQLELLDPSHNTKAITQLGNLKCKETESLEFITTDKKTQVLKYNGQGQLIGKYGKGDITGLATYIGIHDQKYLLEGGLDRYLRVFDIESRAQKAKIYLGTNINRILVLDEELEALQEIEMAKNNKRKQTASDEEDDAEELWSKLETKKEKKRKL</sequence>
<accession>Q6FU05</accession>
<evidence type="ECO:0000250" key="1"/>
<evidence type="ECO:0000256" key="2">
    <source>
        <dbReference type="SAM" id="MobiDB-lite"/>
    </source>
</evidence>
<evidence type="ECO:0000305" key="3"/>
<gene>
    <name type="primary">NSA1</name>
    <name type="ordered locus">CAGL0F07403g</name>
</gene>
<organism>
    <name type="scientific">Candida glabrata (strain ATCC 2001 / BCRC 20586 / JCM 3761 / NBRC 0622 / NRRL Y-65 / CBS 138)</name>
    <name type="common">Yeast</name>
    <name type="synonym">Nakaseomyces glabratus</name>
    <dbReference type="NCBI Taxonomy" id="284593"/>
    <lineage>
        <taxon>Eukaryota</taxon>
        <taxon>Fungi</taxon>
        <taxon>Dikarya</taxon>
        <taxon>Ascomycota</taxon>
        <taxon>Saccharomycotina</taxon>
        <taxon>Saccharomycetes</taxon>
        <taxon>Saccharomycetales</taxon>
        <taxon>Saccharomycetaceae</taxon>
        <taxon>Nakaseomyces</taxon>
    </lineage>
</organism>
<dbReference type="EMBL" id="CR380952">
    <property type="protein sequence ID" value="CAG59213.1"/>
    <property type="molecule type" value="Genomic_DNA"/>
</dbReference>
<dbReference type="RefSeq" id="XP_446289.1">
    <property type="nucleotide sequence ID" value="XM_446289.1"/>
</dbReference>
<dbReference type="SMR" id="Q6FU05"/>
<dbReference type="FunCoup" id="Q6FU05">
    <property type="interactions" value="714"/>
</dbReference>
<dbReference type="STRING" id="284593.Q6FU05"/>
<dbReference type="EnsemblFungi" id="CAGL0F07403g-T">
    <property type="protein sequence ID" value="CAGL0F07403g-T-p1"/>
    <property type="gene ID" value="CAGL0F07403g"/>
</dbReference>
<dbReference type="KEGG" id="cgr:2887812"/>
<dbReference type="CGD" id="CAL0131194">
    <property type="gene designation" value="CAGL0F07403g"/>
</dbReference>
<dbReference type="VEuPathDB" id="FungiDB:CAGL0F07403g"/>
<dbReference type="eggNOG" id="KOG3881">
    <property type="taxonomic scope" value="Eukaryota"/>
</dbReference>
<dbReference type="HOGENOM" id="CLU_033769_4_0_1"/>
<dbReference type="InParanoid" id="Q6FU05"/>
<dbReference type="OMA" id="IWEAKNV"/>
<dbReference type="Proteomes" id="UP000002428">
    <property type="component" value="Chromosome F"/>
</dbReference>
<dbReference type="GO" id="GO:0005730">
    <property type="term" value="C:nucleolus"/>
    <property type="evidence" value="ECO:0007669"/>
    <property type="project" value="UniProtKB-SubCell"/>
</dbReference>
<dbReference type="GO" id="GO:0030687">
    <property type="term" value="C:preribosome, large subunit precursor"/>
    <property type="evidence" value="ECO:0007669"/>
    <property type="project" value="EnsemblFungi"/>
</dbReference>
<dbReference type="GO" id="GO:0042273">
    <property type="term" value="P:ribosomal large subunit biogenesis"/>
    <property type="evidence" value="ECO:0007669"/>
    <property type="project" value="EnsemblFungi"/>
</dbReference>
<dbReference type="GO" id="GO:0006364">
    <property type="term" value="P:rRNA processing"/>
    <property type="evidence" value="ECO:0007669"/>
    <property type="project" value="UniProtKB-KW"/>
</dbReference>
<dbReference type="CDD" id="cd22858">
    <property type="entry name" value="Nsa1"/>
    <property type="match status" value="1"/>
</dbReference>
<dbReference type="InterPro" id="IPR036322">
    <property type="entry name" value="WD40_repeat_dom_sf"/>
</dbReference>
<dbReference type="InterPro" id="IPR037379">
    <property type="entry name" value="WDR74/Nsa1"/>
</dbReference>
<dbReference type="PANTHER" id="PTHR16038">
    <property type="entry name" value="NOP SEVEN ASSOCIATED PROTEIN 1"/>
    <property type="match status" value="1"/>
</dbReference>
<dbReference type="PANTHER" id="PTHR16038:SF4">
    <property type="entry name" value="WD REPEAT-CONTAINING PROTEIN 74"/>
    <property type="match status" value="1"/>
</dbReference>
<dbReference type="SUPFAM" id="SSF50978">
    <property type="entry name" value="WD40 repeat-like"/>
    <property type="match status" value="1"/>
</dbReference>
<comment type="function">
    <text evidence="1">Involved in the biogenesis of the 60S ribosomal subunit.</text>
</comment>
<comment type="subunit">
    <text evidence="1">Component of the pre-66S ribosomal particle.</text>
</comment>
<comment type="subcellular location">
    <subcellularLocation>
        <location evidence="1">Nucleus</location>
        <location evidence="1">Nucleolus</location>
    </subcellularLocation>
</comment>
<comment type="similarity">
    <text evidence="3">Belongs to the NSA1 family.</text>
</comment>
<protein>
    <recommendedName>
        <fullName>Ribosome biogenesis protein NSA1</fullName>
    </recommendedName>
</protein>
<name>NSA1_CANGA</name>
<keyword id="KW-0539">Nucleus</keyword>
<keyword id="KW-1185">Reference proteome</keyword>
<keyword id="KW-0690">Ribosome biogenesis</keyword>
<keyword id="KW-0698">rRNA processing</keyword>
<reference key="1">
    <citation type="journal article" date="2004" name="Nature">
        <title>Genome evolution in yeasts.</title>
        <authorList>
            <person name="Dujon B."/>
            <person name="Sherman D."/>
            <person name="Fischer G."/>
            <person name="Durrens P."/>
            <person name="Casaregola S."/>
            <person name="Lafontaine I."/>
            <person name="de Montigny J."/>
            <person name="Marck C."/>
            <person name="Neuveglise C."/>
            <person name="Talla E."/>
            <person name="Goffard N."/>
            <person name="Frangeul L."/>
            <person name="Aigle M."/>
            <person name="Anthouard V."/>
            <person name="Babour A."/>
            <person name="Barbe V."/>
            <person name="Barnay S."/>
            <person name="Blanchin S."/>
            <person name="Beckerich J.-M."/>
            <person name="Beyne E."/>
            <person name="Bleykasten C."/>
            <person name="Boisrame A."/>
            <person name="Boyer J."/>
            <person name="Cattolico L."/>
            <person name="Confanioleri F."/>
            <person name="de Daruvar A."/>
            <person name="Despons L."/>
            <person name="Fabre E."/>
            <person name="Fairhead C."/>
            <person name="Ferry-Dumazet H."/>
            <person name="Groppi A."/>
            <person name="Hantraye F."/>
            <person name="Hennequin C."/>
            <person name="Jauniaux N."/>
            <person name="Joyet P."/>
            <person name="Kachouri R."/>
            <person name="Kerrest A."/>
            <person name="Koszul R."/>
            <person name="Lemaire M."/>
            <person name="Lesur I."/>
            <person name="Ma L."/>
            <person name="Muller H."/>
            <person name="Nicaud J.-M."/>
            <person name="Nikolski M."/>
            <person name="Oztas S."/>
            <person name="Ozier-Kalogeropoulos O."/>
            <person name="Pellenz S."/>
            <person name="Potier S."/>
            <person name="Richard G.-F."/>
            <person name="Straub M.-L."/>
            <person name="Suleau A."/>
            <person name="Swennen D."/>
            <person name="Tekaia F."/>
            <person name="Wesolowski-Louvel M."/>
            <person name="Westhof E."/>
            <person name="Wirth B."/>
            <person name="Zeniou-Meyer M."/>
            <person name="Zivanovic Y."/>
            <person name="Bolotin-Fukuhara M."/>
            <person name="Thierry A."/>
            <person name="Bouchier C."/>
            <person name="Caudron B."/>
            <person name="Scarpelli C."/>
            <person name="Gaillardin C."/>
            <person name="Weissenbach J."/>
            <person name="Wincker P."/>
            <person name="Souciet J.-L."/>
        </authorList>
    </citation>
    <scope>NUCLEOTIDE SEQUENCE [LARGE SCALE GENOMIC DNA]</scope>
    <source>
        <strain>ATCC 2001 / BCRC 20586 / JCM 3761 / NBRC 0622 / NRRL Y-65 / CBS 138</strain>
    </source>
</reference>